<keyword id="KW-0050">Antiport</keyword>
<keyword id="KW-0150">Chloroplast</keyword>
<keyword id="KW-0375">Hydrogen ion transport</keyword>
<keyword id="KW-0406">Ion transport</keyword>
<keyword id="KW-0472">Membrane</keyword>
<keyword id="KW-0934">Plastid</keyword>
<keyword id="KW-1001">Plastid inner membrane</keyword>
<keyword id="KW-0630">Potassium</keyword>
<keyword id="KW-0633">Potassium transport</keyword>
<keyword id="KW-0812">Transmembrane</keyword>
<keyword id="KW-1133">Transmembrane helix</keyword>
<keyword id="KW-0813">Transport</keyword>
<feature type="chain" id="PRO_0000293517" description="Potassium/proton antiporter CemA">
    <location>
        <begin position="1"/>
        <end position="261"/>
    </location>
</feature>
<feature type="transmembrane region" description="Helical" evidence="1">
    <location>
        <begin position="47"/>
        <end position="67"/>
    </location>
</feature>
<feature type="transmembrane region" description="Helical" evidence="1">
    <location>
        <begin position="138"/>
        <end position="158"/>
    </location>
</feature>
<sequence>MGPIPRSITRTLSRFRTELTSESSPLVIHELKVAKYKVSASLQYLAFLVFLPWGISISFQEGLGPWVTNWWNTGQSKIFFSYLQEENALERFGEIEELFLLERMVEDSSETHSQDLRIEIHRKTIQLVKMYNKDCIQIISHLLTNMICFAISSAYFIMSKKKLTVLNSWIQELFYSLSDTMKAFSIISVTDLCIGFHSTHGWELMIDSISENYGFVHNEQIISGLVPTFPVISDTIFKYWIFRHFNRISPPLVVIYHSMNE</sequence>
<gene>
    <name evidence="1" type="primary">cemA</name>
</gene>
<name>CEMA_GINBI</name>
<protein>
    <recommendedName>
        <fullName evidence="1">Potassium/proton antiporter CemA</fullName>
    </recommendedName>
    <alternativeName>
        <fullName evidence="1">Chloroplast envelope membrane protein A</fullName>
        <shortName evidence="1">CemA</shortName>
    </alternativeName>
</protein>
<geneLocation type="chloroplast"/>
<reference key="1">
    <citation type="journal article" date="2005" name="Mol. Biol. Evol.">
        <title>Identifying the basal angiosperm node in chloroplast genome phylogenies: sampling one's way out of the Felsenstein zone.</title>
        <authorList>
            <person name="Leebens-Mack J."/>
            <person name="Raubeson L.A."/>
            <person name="Cui L."/>
            <person name="Kuehl J.V."/>
            <person name="Fourcade M.H."/>
            <person name="Chumley T.W."/>
            <person name="Boore J.L."/>
            <person name="Jansen R.K."/>
            <person name="dePamphilis C.W."/>
        </authorList>
    </citation>
    <scope>NUCLEOTIDE SEQUENCE [GENOMIC DNA]</scope>
</reference>
<proteinExistence type="inferred from homology"/>
<accession>Q4FGG9</accession>
<evidence type="ECO:0000255" key="1">
    <source>
        <dbReference type="HAMAP-Rule" id="MF_01308"/>
    </source>
</evidence>
<evidence type="ECO:0000305" key="2"/>
<comment type="function">
    <text evidence="1">Contributes to K(+)/H(+) antiport activity by supporting proton efflux to control proton extrusion and homeostasis in chloroplasts in a light-dependent manner to modulate photosynthesis. Prevents excessive induction of non-photochemical quenching (NPQ) under continuous-light conditions. Indirectly promotes efficient inorganic carbon uptake into chloroplasts.</text>
</comment>
<comment type="catalytic activity">
    <reaction evidence="1">
        <text>K(+)(in) + H(+)(out) = K(+)(out) + H(+)(in)</text>
        <dbReference type="Rhea" id="RHEA:29467"/>
        <dbReference type="ChEBI" id="CHEBI:15378"/>
        <dbReference type="ChEBI" id="CHEBI:29103"/>
    </reaction>
</comment>
<comment type="subcellular location">
    <subcellularLocation>
        <location evidence="1">Plastid</location>
        <location evidence="1">Chloroplast inner membrane</location>
        <topology evidence="1">Multi-pass membrane protein</topology>
    </subcellularLocation>
</comment>
<comment type="similarity">
    <text evidence="1 2">Belongs to the CemA family.</text>
</comment>
<dbReference type="EMBL" id="DQ069362">
    <property type="protein sequence ID" value="AAZ03806.1"/>
    <property type="molecule type" value="Genomic_DNA"/>
</dbReference>
<dbReference type="SMR" id="Q4FGG9"/>
<dbReference type="GO" id="GO:0009706">
    <property type="term" value="C:chloroplast inner membrane"/>
    <property type="evidence" value="ECO:0007669"/>
    <property type="project" value="UniProtKB-SubCell"/>
</dbReference>
<dbReference type="GO" id="GO:0015297">
    <property type="term" value="F:antiporter activity"/>
    <property type="evidence" value="ECO:0007669"/>
    <property type="project" value="UniProtKB-KW"/>
</dbReference>
<dbReference type="GO" id="GO:0015078">
    <property type="term" value="F:proton transmembrane transporter activity"/>
    <property type="evidence" value="ECO:0007669"/>
    <property type="project" value="UniProtKB-UniRule"/>
</dbReference>
<dbReference type="GO" id="GO:0006813">
    <property type="term" value="P:potassium ion transport"/>
    <property type="evidence" value="ECO:0007669"/>
    <property type="project" value="UniProtKB-UniRule"/>
</dbReference>
<dbReference type="HAMAP" id="MF_01308">
    <property type="entry name" value="CemA_PxcA"/>
    <property type="match status" value="1"/>
</dbReference>
<dbReference type="InterPro" id="IPR004282">
    <property type="entry name" value="CemA"/>
</dbReference>
<dbReference type="PANTHER" id="PTHR33650:SF2">
    <property type="entry name" value="CHLOROPLAST ENVELOPE MEMBRANE PROTEIN"/>
    <property type="match status" value="1"/>
</dbReference>
<dbReference type="PANTHER" id="PTHR33650">
    <property type="entry name" value="CHLOROPLAST ENVELOPE MEMBRANE PROTEIN-RELATED"/>
    <property type="match status" value="1"/>
</dbReference>
<dbReference type="Pfam" id="PF03040">
    <property type="entry name" value="CemA"/>
    <property type="match status" value="1"/>
</dbReference>
<organism>
    <name type="scientific">Ginkgo biloba</name>
    <name type="common">Ginkgo</name>
    <name type="synonym">Maidenhair tree</name>
    <dbReference type="NCBI Taxonomy" id="3311"/>
    <lineage>
        <taxon>Eukaryota</taxon>
        <taxon>Viridiplantae</taxon>
        <taxon>Streptophyta</taxon>
        <taxon>Embryophyta</taxon>
        <taxon>Tracheophyta</taxon>
        <taxon>Spermatophyta</taxon>
        <taxon>Ginkgoidae</taxon>
        <taxon>Ginkgoales</taxon>
        <taxon>Ginkgoaceae</taxon>
        <taxon>Ginkgo</taxon>
    </lineage>
</organism>